<sequence length="181" mass="20606">MFSAFRDTASIGFSDTHQDEKTLRFLKKQISQFIKHLKEYYPNNELTKKLVMKYSDVQLLPYTKGATKDTYTSGLFDHTTGVIKIAPRDGLGNVRDEQSLNKSICHELAHGTRVKYPGESSHSDEWKDAWKTFLKIAADELGWKIEVPCSSVSFYGLTKDDCENCVWDQDPETCPKTAKLA</sequence>
<accession>O41054</accession>
<reference key="1">
    <citation type="journal article" date="1996" name="Virology">
        <title>Analysis of 76 kb of the chlorella virus PBCV-1 330-kb genome: map positions 182 to 258.</title>
        <authorList>
            <person name="Kutish G.F."/>
            <person name="Li Y."/>
            <person name="Lu Z."/>
            <person name="Furuta M."/>
            <person name="Rock D.L."/>
            <person name="van Etten J.L."/>
        </authorList>
    </citation>
    <scope>NUCLEOTIDE SEQUENCE [LARGE SCALE GENOMIC DNA]</scope>
</reference>
<reference key="2">
    <citation type="journal article" date="2010" name="J. Virol.">
        <title>Microarray analysis of Paramecium bursaria chlorella virus 1 transcription.</title>
        <authorList>
            <person name="Yanai-Balser G.M."/>
            <person name="Duncan G.A."/>
            <person name="Eudy J.D."/>
            <person name="Wang D."/>
            <person name="Li X."/>
            <person name="Agarkova I.V."/>
            <person name="Dunigan D.D."/>
            <person name="Van Etten J.L."/>
        </authorList>
    </citation>
    <scope>INDUCTION</scope>
</reference>
<reference evidence="5" key="3">
    <citation type="journal article" date="2019" name="Nat. Commun.">
        <title>Near-atomic structure of a giant virus.</title>
        <authorList>
            <person name="Fang Q."/>
            <person name="Zhu D."/>
            <person name="Agarkova I."/>
            <person name="Adhikari J."/>
            <person name="Klose T."/>
            <person name="Liu Y."/>
            <person name="Chen Z."/>
            <person name="Sun Y."/>
            <person name="Gross M.L."/>
            <person name="Van Etten J.L."/>
            <person name="Zhang X."/>
            <person name="Rossmann M.G."/>
        </authorList>
    </citation>
    <scope>STRUCTURE BY ELECTRON MICROSCOPY (3.50 ANGSTROMS)</scope>
    <scope>FUNCTION</scope>
    <scope>SUBCELLULAR LOCATION</scope>
    <scope>INTERACTION WITH THE MAJOR CAPSID PROTEIN</scope>
</reference>
<reference evidence="6" key="4">
    <citation type="journal article" date="2022" name="Nat. Commun.">
        <title>Near-atomic, non-icosahedrally averaged structure of giant virus Paramecium bursaria chlorella virus 1.</title>
        <authorList>
            <person name="Shao Q."/>
            <person name="Agarkova I.V."/>
            <person name="Noel E.A."/>
            <person name="Dunigan D.D."/>
            <person name="Liu Y."/>
            <person name="Wang A."/>
            <person name="Guo M."/>
            <person name="Xie L."/>
            <person name="Zhao X."/>
            <person name="Rossmann M.G."/>
            <person name="Van Etten J.L."/>
            <person name="Klose T."/>
            <person name="Fang Q."/>
        </authorList>
    </citation>
    <scope>STRUCTURE BY ELECTRON MICROSCOPY (3.80 ANGSTROMS)</scope>
</reference>
<name>P4_PBCV1</name>
<keyword id="KW-0002">3D-structure</keyword>
<keyword id="KW-0167">Capsid protein</keyword>
<keyword id="KW-0426">Late protein</keyword>
<keyword id="KW-1185">Reference proteome</keyword>
<keyword id="KW-0946">Virion</keyword>
<organismHost>
    <name type="scientific">Chlorella</name>
    <dbReference type="NCBI Taxonomy" id="3071"/>
</organismHost>
<evidence type="ECO:0000269" key="1">
    <source>
    </source>
</evidence>
<evidence type="ECO:0000269" key="2">
    <source>
    </source>
</evidence>
<evidence type="ECO:0000312" key="3">
    <source>
        <dbReference type="EMBL" id="AAC96926.1"/>
    </source>
</evidence>
<evidence type="ECO:0000312" key="4">
    <source>
        <dbReference type="Proteomes" id="UP000000862"/>
    </source>
</evidence>
<evidence type="ECO:0007744" key="5">
    <source>
        <dbReference type="PDB" id="6NCL"/>
    </source>
</evidence>
<evidence type="ECO:0007744" key="6">
    <source>
        <dbReference type="PDB" id="8H2I"/>
    </source>
</evidence>
<dbReference type="EMBL" id="JF411744">
    <property type="protein sequence ID" value="AAC96926.1"/>
    <property type="molecule type" value="Genomic_DNA"/>
</dbReference>
<dbReference type="PIR" id="T18074">
    <property type="entry name" value="T18074"/>
</dbReference>
<dbReference type="RefSeq" id="NP_048928.1">
    <property type="nucleotide sequence ID" value="NC_000852.5"/>
</dbReference>
<dbReference type="PDB" id="6NCL">
    <property type="method" value="EM"/>
    <property type="resolution" value="3.50 A"/>
    <property type="chains" value="c2/c3/c4/c5=1-181"/>
</dbReference>
<dbReference type="PDB" id="8H2I">
    <property type="method" value="EM"/>
    <property type="resolution" value="3.80 A"/>
    <property type="chains" value="bL/bM/bN/bO=1-181"/>
</dbReference>
<dbReference type="PDBsum" id="6NCL"/>
<dbReference type="PDBsum" id="8H2I"/>
<dbReference type="EMDB" id="EMD-0436"/>
<dbReference type="EMDB" id="EMD-34438"/>
<dbReference type="SMR" id="O41054"/>
<dbReference type="GeneID" id="918071"/>
<dbReference type="KEGG" id="vg:918071"/>
<dbReference type="OrthoDB" id="10744at10239"/>
<dbReference type="Proteomes" id="UP000000862">
    <property type="component" value="Genome"/>
</dbReference>
<dbReference type="GO" id="GO:0019028">
    <property type="term" value="C:viral capsid"/>
    <property type="evidence" value="ECO:0007669"/>
    <property type="project" value="UniProtKB-KW"/>
</dbReference>
<feature type="chain" id="PRO_0000460570" description="Minor capsid protein P4">
    <location>
        <begin position="1"/>
        <end position="181"/>
    </location>
</feature>
<organism evidence="3 4">
    <name type="scientific">Paramecium bursaria Chlorella virus 1</name>
    <name type="common">PBCV-1</name>
    <dbReference type="NCBI Taxonomy" id="10506"/>
    <lineage>
        <taxon>Viruses</taxon>
        <taxon>Varidnaviria</taxon>
        <taxon>Bamfordvirae</taxon>
        <taxon>Nucleocytoviricota</taxon>
        <taxon>Megaviricetes</taxon>
        <taxon>Algavirales</taxon>
        <taxon>Phycodnaviridae</taxon>
        <taxon>Chlorovirus</taxon>
    </lineage>
</organism>
<proteinExistence type="evidence at protein level"/>
<comment type="function">
    <text evidence="2">One of the minor capsid proteins that constitute a network internal to the major capsid proteins and outside the lipid membrane (PubMed:30674888). The minor capsid proteins glue and stabilize the capsomers (PubMed:30674888).</text>
</comment>
<comment type="subunit">
    <text evidence="2">Interacts with the major capsid protein.</text>
</comment>
<comment type="subcellular location">
    <subcellularLocation>
        <location evidence="2">Virion</location>
    </subcellularLocation>
</comment>
<comment type="induction">
    <text evidence="1">Expressed in the late phase of the viral replicative cycle.</text>
</comment>
<gene>
    <name evidence="3" type="primary">A572R</name>
</gene>
<protein>
    <recommendedName>
        <fullName>Minor capsid protein P4</fullName>
    </recommendedName>
</protein>